<sequence>MSDNLYTYGVIEQEDIELEIDGVAGAERVYTVDYRTLSAVVSDIDTTDPERTDEDVQVHNTVLQHVLEYDGGRTVVPMSFGMAFKNGRTLKGVMRGARRALRSALNDIEGTVELGVKIITSSEGGVSHDAIRADIGDRLSELSINETENDLFSDRLVVNKSYLVARDRRDDFDAAIDTIEEEYGDELTVQYTGPWAPYNFVDIHIGADQQRGR</sequence>
<comment type="function">
    <text evidence="2">A minor component of the gas vesicle, may be involved in preventing GvpA aggregation during gas vesicle nucleation (By similarity). Gas vesicles are hollow, gas filled proteinaceous nanostructures found in some microorganisms. They allow positioning of halobacteria at the optimal depth for growth in the poorly aerated, shallow brine pools of their habitat (By similarity).</text>
</comment>
<comment type="function">
    <text evidence="4 5">Expression of a 9.5 kb mc-vac DNA fragment containing 2 divergently transcribed regions (gvpD-gvpE-gvpF-gvpG-gvpH-gvpI-gvpJ-gvpK-gvpL-gvpM and gvpA-gvpC-gvpN-gvpO) allows H.volcanii to produce gas vesicles.</text>
</comment>
<comment type="subunit">
    <text evidence="2">Binds GvpA.</text>
</comment>
<comment type="subcellular location">
    <subcellularLocation>
        <location evidence="7">Gas vesicle</location>
    </subcellularLocation>
    <text evidence="1">Probably faces the interior of the gas vesicle.</text>
</comment>
<comment type="induction">
    <text evidence="3 4 5">Transcribed from early-log phase, decreases as cells enter stationary phase, probably as a long gvpF-gvpM RNA (PubMed:1404376). Highly expressed in 25% salt, poorly expressed in 15% salt, no gas vesicles are formed at 15% salt (PubMed:8757736). Accumulates in exponential but not stationary phase (at protein level) (PubMed:12864859).</text>
</comment>
<comment type="miscellaneous">
    <text evidence="4">Encoded in a 14-gene locus called mc-vac.</text>
</comment>
<comment type="similarity">
    <text evidence="7">Belongs to the gas vesicle GvpF/GvpL family.</text>
</comment>
<keyword id="KW-0304">Gas vesicle</keyword>
<reference key="1">
    <citation type="journal article" date="1992" name="J. Mol. Biol.">
        <title>Three different but related gene clusters encoding gas vesicles in halophilic archaea.</title>
        <authorList>
            <person name="Englert C."/>
            <person name="Krueger K."/>
            <person name="Offner S."/>
            <person name="Pfeifer F."/>
        </authorList>
    </citation>
    <scope>NUCLEOTIDE SEQUENCE [GENOMIC DNA]</scope>
    <scope>INDUCTION</scope>
    <scope>GAS VESICLE GENE CLUSTER</scope>
    <source>
        <strain>ATCC 33500 / DSM 1411 / JCM 8866 / NBRC 14739 / NCIMB 2177 / R-4</strain>
    </source>
</reference>
<reference key="2">
    <citation type="journal article" date="2012" name="J. Bacteriol.">
        <title>Complete genome sequence of the metabolically versatile halophilic archaeon Haloferax mediterranei, a poly(3-hydroxybutyrate-co-3-hydroxyvalerate) producer.</title>
        <authorList>
            <person name="Han J."/>
            <person name="Zhang F."/>
            <person name="Hou J."/>
            <person name="Liu X."/>
            <person name="Li M."/>
            <person name="Liu H."/>
            <person name="Cai L."/>
            <person name="Zhang B."/>
            <person name="Chen Y."/>
            <person name="Zhou J."/>
            <person name="Hu S."/>
            <person name="Xiang H."/>
        </authorList>
    </citation>
    <scope>NUCLEOTIDE SEQUENCE [LARGE SCALE GENOMIC DNA]</scope>
    <source>
        <strain>ATCC 33500 / DSM 1411 / JCM 8866 / NBRC 14739 / NCIMB 2177 / R-4</strain>
    </source>
</reference>
<reference key="3">
    <citation type="journal article" date="1996" name="Microbiology">
        <title>Influence of salt on the transcription of the gas-vesicle genes of Haloferax mediterranei and identification of the endogenous transcriptional activator gene.</title>
        <authorList>
            <person name="Roeder R."/>
            <person name="Pfeifer F."/>
        </authorList>
    </citation>
    <scope>INDUCTION BY SALT</scope>
    <source>
        <strain>ATCC 33500 / DSM 1411 / JCM 8866 / NBRC 14739 / NCIMB 2177 / R-4</strain>
    </source>
</reference>
<reference key="4">
    <citation type="journal article" date="2003" name="Mol. Microbiol.">
        <title>Regulation of the expression of gas vesicle genes in Haloferax mediterranei: interaction of the two regulatory proteins GvpD and GvpE.</title>
        <authorList>
            <person name="Zimmermann P."/>
            <person name="Pfeifer F."/>
        </authorList>
    </citation>
    <scope>INDUCTION</scope>
</reference>
<feature type="chain" id="PRO_0000182680" description="Gas vesicle protein F">
    <location>
        <begin position="1"/>
        <end position="213"/>
    </location>
</feature>
<accession>Q02231</accession>
<accession>I3R595</accession>
<gene>
    <name evidence="6" type="primary">gvpF</name>
    <name type="ordered locus">HFX_1699</name>
</gene>
<organism>
    <name type="scientific">Haloferax mediterranei (strain ATCC 33500 / DSM 1411 / JCM 8866 / NBRC 14739 / NCIMB 2177 / R-4)</name>
    <name type="common">Halobacterium mediterranei</name>
    <dbReference type="NCBI Taxonomy" id="523841"/>
    <lineage>
        <taxon>Archaea</taxon>
        <taxon>Methanobacteriati</taxon>
        <taxon>Methanobacteriota</taxon>
        <taxon>Stenosarchaea group</taxon>
        <taxon>Halobacteria</taxon>
        <taxon>Halobacteriales</taxon>
        <taxon>Haloferacaceae</taxon>
        <taxon>Haloferax</taxon>
    </lineage>
</organism>
<name>GVPF_HALMT</name>
<protein>
    <recommendedName>
        <fullName>Gas vesicle protein F</fullName>
        <shortName>GvpF</shortName>
    </recommendedName>
</protein>
<evidence type="ECO:0000250" key="1">
    <source>
        <dbReference type="UniProtKB" id="A8Y9T3"/>
    </source>
</evidence>
<evidence type="ECO:0000250" key="2">
    <source>
        <dbReference type="UniProtKB" id="Q9HI21"/>
    </source>
</evidence>
<evidence type="ECO:0000269" key="3">
    <source>
    </source>
</evidence>
<evidence type="ECO:0000269" key="4">
    <source>
    </source>
</evidence>
<evidence type="ECO:0000269" key="5">
    <source>
    </source>
</evidence>
<evidence type="ECO:0000303" key="6">
    <source>
    </source>
</evidence>
<evidence type="ECO:0000305" key="7"/>
<dbReference type="EMBL" id="X64701">
    <property type="protein sequence ID" value="CAA45948.1"/>
    <property type="molecule type" value="Genomic_DNA"/>
</dbReference>
<dbReference type="EMBL" id="CP001868">
    <property type="protein sequence ID" value="AFK19405.1"/>
    <property type="molecule type" value="Genomic_DNA"/>
</dbReference>
<dbReference type="PIR" id="S28119">
    <property type="entry name" value="S28119"/>
</dbReference>
<dbReference type="RefSeq" id="WP_004056703.1">
    <property type="nucleotide sequence ID" value="NC_017941.2"/>
</dbReference>
<dbReference type="SMR" id="Q02231"/>
<dbReference type="STRING" id="523841.HFX_1699"/>
<dbReference type="PaxDb" id="523841-HFX_1699"/>
<dbReference type="GeneID" id="40157054"/>
<dbReference type="KEGG" id="hme:HFX_1699"/>
<dbReference type="eggNOG" id="arCOG03091">
    <property type="taxonomic scope" value="Archaea"/>
</dbReference>
<dbReference type="HOGENOM" id="CLU_065736_3_0_2"/>
<dbReference type="OrthoDB" id="130966at2157"/>
<dbReference type="Proteomes" id="UP000006469">
    <property type="component" value="Chromosome"/>
</dbReference>
<dbReference type="GO" id="GO:0031411">
    <property type="term" value="C:gas vesicle"/>
    <property type="evidence" value="ECO:0007669"/>
    <property type="project" value="UniProtKB-SubCell"/>
</dbReference>
<dbReference type="GO" id="GO:0031412">
    <property type="term" value="P:gas vesicle organization"/>
    <property type="evidence" value="ECO:0007669"/>
    <property type="project" value="InterPro"/>
</dbReference>
<dbReference type="InterPro" id="IPR009430">
    <property type="entry name" value="GvpL/GvpF"/>
</dbReference>
<dbReference type="PANTHER" id="PTHR36852">
    <property type="entry name" value="PROTEIN GVPL 2"/>
    <property type="match status" value="1"/>
</dbReference>
<dbReference type="PANTHER" id="PTHR36852:SF1">
    <property type="entry name" value="PROTEIN GVPL 2"/>
    <property type="match status" value="1"/>
</dbReference>
<dbReference type="Pfam" id="PF06386">
    <property type="entry name" value="GvpL_GvpF"/>
    <property type="match status" value="2"/>
</dbReference>
<proteinExistence type="evidence at protein level"/>